<keyword id="KW-0002">3D-structure</keyword>
<keyword id="KW-1185">Reference proteome</keyword>
<keyword id="KW-0687">Ribonucleoprotein</keyword>
<keyword id="KW-0689">Ribosomal protein</keyword>
<keyword id="KW-0694">RNA-binding</keyword>
<keyword id="KW-0699">rRNA-binding</keyword>
<sequence>MAQQRRGGRKRRKVDYIAANHIEYIDYKDTELLKRFISERGKILPRRVTGTGAKNQRKLTIAIKRARIMGLLPFVSDEQ</sequence>
<dbReference type="EMBL" id="AE016830">
    <property type="protein sequence ID" value="AAO79894.1"/>
    <property type="molecule type" value="Genomic_DNA"/>
</dbReference>
<dbReference type="RefSeq" id="NP_813822.1">
    <property type="nucleotide sequence ID" value="NC_004668.1"/>
</dbReference>
<dbReference type="RefSeq" id="WP_002356021.1">
    <property type="nucleotide sequence ID" value="NZ_KE136524.1"/>
</dbReference>
<dbReference type="PDB" id="6WUB">
    <property type="method" value="EM"/>
    <property type="resolution" value="3.20 A"/>
    <property type="chains" value="r=13-78"/>
</dbReference>
<dbReference type="PDB" id="7P7Q">
    <property type="method" value="EM"/>
    <property type="resolution" value="2.40 A"/>
    <property type="chains" value="s=1-79"/>
</dbReference>
<dbReference type="PDB" id="7P7R">
    <property type="method" value="EM"/>
    <property type="resolution" value="2.90 A"/>
    <property type="chains" value="s=1-79"/>
</dbReference>
<dbReference type="PDBsum" id="6WUB"/>
<dbReference type="PDBsum" id="7P7Q"/>
<dbReference type="PDBsum" id="7P7R"/>
<dbReference type="EMDB" id="EMD-13241"/>
<dbReference type="EMDB" id="EMD-13242"/>
<dbReference type="SMR" id="Q839Y8"/>
<dbReference type="STRING" id="226185.EF_0009"/>
<dbReference type="EnsemblBacteria" id="AAO79894">
    <property type="protein sequence ID" value="AAO79894"/>
    <property type="gene ID" value="EF_0009"/>
</dbReference>
<dbReference type="GeneID" id="60892572"/>
<dbReference type="KEGG" id="efa:EF0009"/>
<dbReference type="PATRIC" id="fig|226185.45.peg.245"/>
<dbReference type="eggNOG" id="COG0238">
    <property type="taxonomic scope" value="Bacteria"/>
</dbReference>
<dbReference type="HOGENOM" id="CLU_148710_2_2_9"/>
<dbReference type="Proteomes" id="UP000001415">
    <property type="component" value="Chromosome"/>
</dbReference>
<dbReference type="GO" id="GO:0022627">
    <property type="term" value="C:cytosolic small ribosomal subunit"/>
    <property type="evidence" value="ECO:0007669"/>
    <property type="project" value="TreeGrafter"/>
</dbReference>
<dbReference type="GO" id="GO:0070181">
    <property type="term" value="F:small ribosomal subunit rRNA binding"/>
    <property type="evidence" value="ECO:0007669"/>
    <property type="project" value="TreeGrafter"/>
</dbReference>
<dbReference type="GO" id="GO:0003735">
    <property type="term" value="F:structural constituent of ribosome"/>
    <property type="evidence" value="ECO:0007669"/>
    <property type="project" value="InterPro"/>
</dbReference>
<dbReference type="GO" id="GO:0006412">
    <property type="term" value="P:translation"/>
    <property type="evidence" value="ECO:0007669"/>
    <property type="project" value="UniProtKB-UniRule"/>
</dbReference>
<dbReference type="FunFam" id="4.10.640.10:FF:000003">
    <property type="entry name" value="30S ribosomal protein S18"/>
    <property type="match status" value="1"/>
</dbReference>
<dbReference type="Gene3D" id="4.10.640.10">
    <property type="entry name" value="Ribosomal protein S18"/>
    <property type="match status" value="1"/>
</dbReference>
<dbReference type="HAMAP" id="MF_00270">
    <property type="entry name" value="Ribosomal_bS18"/>
    <property type="match status" value="1"/>
</dbReference>
<dbReference type="InterPro" id="IPR001648">
    <property type="entry name" value="Ribosomal_bS18"/>
</dbReference>
<dbReference type="InterPro" id="IPR018275">
    <property type="entry name" value="Ribosomal_bS18_CS"/>
</dbReference>
<dbReference type="InterPro" id="IPR036870">
    <property type="entry name" value="Ribosomal_bS18_sf"/>
</dbReference>
<dbReference type="NCBIfam" id="TIGR00165">
    <property type="entry name" value="S18"/>
    <property type="match status" value="1"/>
</dbReference>
<dbReference type="PANTHER" id="PTHR13479">
    <property type="entry name" value="30S RIBOSOMAL PROTEIN S18"/>
    <property type="match status" value="1"/>
</dbReference>
<dbReference type="PANTHER" id="PTHR13479:SF40">
    <property type="entry name" value="SMALL RIBOSOMAL SUBUNIT PROTEIN BS18M"/>
    <property type="match status" value="1"/>
</dbReference>
<dbReference type="Pfam" id="PF01084">
    <property type="entry name" value="Ribosomal_S18"/>
    <property type="match status" value="1"/>
</dbReference>
<dbReference type="PRINTS" id="PR00974">
    <property type="entry name" value="RIBOSOMALS18"/>
</dbReference>
<dbReference type="SUPFAM" id="SSF46911">
    <property type="entry name" value="Ribosomal protein S18"/>
    <property type="match status" value="1"/>
</dbReference>
<dbReference type="PROSITE" id="PS00057">
    <property type="entry name" value="RIBOSOMAL_S18"/>
    <property type="match status" value="1"/>
</dbReference>
<organism>
    <name type="scientific">Enterococcus faecalis (strain ATCC 700802 / V583)</name>
    <dbReference type="NCBI Taxonomy" id="226185"/>
    <lineage>
        <taxon>Bacteria</taxon>
        <taxon>Bacillati</taxon>
        <taxon>Bacillota</taxon>
        <taxon>Bacilli</taxon>
        <taxon>Lactobacillales</taxon>
        <taxon>Enterococcaceae</taxon>
        <taxon>Enterococcus</taxon>
    </lineage>
</organism>
<accession>Q839Y8</accession>
<gene>
    <name evidence="1" type="primary">rpsR</name>
    <name type="ordered locus">EF_0009</name>
</gene>
<evidence type="ECO:0000255" key="1">
    <source>
        <dbReference type="HAMAP-Rule" id="MF_00270"/>
    </source>
</evidence>
<evidence type="ECO:0000305" key="2"/>
<evidence type="ECO:0007829" key="3">
    <source>
        <dbReference type="PDB" id="6WUB"/>
    </source>
</evidence>
<protein>
    <recommendedName>
        <fullName evidence="1">Small ribosomal subunit protein bS18</fullName>
    </recommendedName>
    <alternativeName>
        <fullName evidence="2">30S ribosomal protein S18</fullName>
    </alternativeName>
</protein>
<proteinExistence type="evidence at protein level"/>
<name>RS18_ENTFA</name>
<comment type="function">
    <text evidence="1">Binds as a heterodimer with protein bS6 to the central domain of the 16S rRNA, where it helps stabilize the platform of the 30S subunit.</text>
</comment>
<comment type="subunit">
    <text evidence="1">Part of the 30S ribosomal subunit. Forms a tight heterodimer with protein bS6.</text>
</comment>
<comment type="similarity">
    <text evidence="1">Belongs to the bacterial ribosomal protein bS18 family.</text>
</comment>
<reference key="1">
    <citation type="journal article" date="2003" name="Science">
        <title>Role of mobile DNA in the evolution of vancomycin-resistant Enterococcus faecalis.</title>
        <authorList>
            <person name="Paulsen I.T."/>
            <person name="Banerjei L."/>
            <person name="Myers G.S.A."/>
            <person name="Nelson K.E."/>
            <person name="Seshadri R."/>
            <person name="Read T.D."/>
            <person name="Fouts D.E."/>
            <person name="Eisen J.A."/>
            <person name="Gill S.R."/>
            <person name="Heidelberg J.F."/>
            <person name="Tettelin H."/>
            <person name="Dodson R.J."/>
            <person name="Umayam L.A."/>
            <person name="Brinkac L.M."/>
            <person name="Beanan M.J."/>
            <person name="Daugherty S.C."/>
            <person name="DeBoy R.T."/>
            <person name="Durkin S.A."/>
            <person name="Kolonay J.F."/>
            <person name="Madupu R."/>
            <person name="Nelson W.C."/>
            <person name="Vamathevan J.J."/>
            <person name="Tran B."/>
            <person name="Upton J."/>
            <person name="Hansen T."/>
            <person name="Shetty J."/>
            <person name="Khouri H.M."/>
            <person name="Utterback T.R."/>
            <person name="Radune D."/>
            <person name="Ketchum K.A."/>
            <person name="Dougherty B.A."/>
            <person name="Fraser C.M."/>
        </authorList>
    </citation>
    <scope>NUCLEOTIDE SEQUENCE [LARGE SCALE GENOMIC DNA]</scope>
    <source>
        <strain>ATCC 700802 / V583</strain>
    </source>
</reference>
<feature type="chain" id="PRO_0000111156" description="Small ribosomal subunit protein bS18">
    <location>
        <begin position="1"/>
        <end position="79"/>
    </location>
</feature>
<feature type="helix" evidence="3">
    <location>
        <begin position="16"/>
        <end position="19"/>
    </location>
</feature>
<feature type="turn" evidence="3">
    <location>
        <begin position="26"/>
        <end position="28"/>
    </location>
</feature>
<feature type="helix" evidence="3">
    <location>
        <begin position="30"/>
        <end position="33"/>
    </location>
</feature>
<feature type="helix" evidence="3">
    <location>
        <begin position="46"/>
        <end position="49"/>
    </location>
</feature>
<feature type="helix" evidence="3">
    <location>
        <begin position="53"/>
        <end position="68"/>
    </location>
</feature>